<comment type="function">
    <text evidence="1">Negative regulator of FtsZ ring formation; modulates the frequency and position of FtsZ ring formation. Inhibits FtsZ ring formation at polar sites. Interacts either with FtsZ or with one of its binding partners to promote depolymerization.</text>
</comment>
<comment type="subcellular location">
    <subcellularLocation>
        <location>Cell membrane</location>
        <topology>Single-pass membrane protein</topology>
    </subcellularLocation>
    <text evidence="1">Colocalized with FtsZ to the nascent septal site.</text>
</comment>
<comment type="similarity">
    <text evidence="1">Belongs to the EzrA family.</text>
</comment>
<comment type="sequence caution" evidence="2">
    <conflict type="erroneous initiation">
        <sequence resource="EMBL-CDS" id="AAK99520"/>
    </conflict>
</comment>
<proteinExistence type="inferred from homology"/>
<reference key="1">
    <citation type="journal article" date="2001" name="J. Bacteriol.">
        <title>Genome of the bacterium Streptococcus pneumoniae strain R6.</title>
        <authorList>
            <person name="Hoskins J."/>
            <person name="Alborn W.E. Jr."/>
            <person name="Arnold J."/>
            <person name="Blaszczak L.C."/>
            <person name="Burgett S."/>
            <person name="DeHoff B.S."/>
            <person name="Estrem S.T."/>
            <person name="Fritz L."/>
            <person name="Fu D.-J."/>
            <person name="Fuller W."/>
            <person name="Geringer C."/>
            <person name="Gilmour R."/>
            <person name="Glass J.S."/>
            <person name="Khoja H."/>
            <person name="Kraft A.R."/>
            <person name="Lagace R.E."/>
            <person name="LeBlanc D.J."/>
            <person name="Lee L.N."/>
            <person name="Lefkowitz E.J."/>
            <person name="Lu J."/>
            <person name="Matsushima P."/>
            <person name="McAhren S.M."/>
            <person name="McHenney M."/>
            <person name="McLeaster K."/>
            <person name="Mundy C.W."/>
            <person name="Nicas T.I."/>
            <person name="Norris F.H."/>
            <person name="O'Gara M."/>
            <person name="Peery R.B."/>
            <person name="Robertson G.T."/>
            <person name="Rockey P."/>
            <person name="Sun P.-M."/>
            <person name="Winkler M.E."/>
            <person name="Yang Y."/>
            <person name="Young-Bellido M."/>
            <person name="Zhao G."/>
            <person name="Zook C.A."/>
            <person name="Baltz R.H."/>
            <person name="Jaskunas S.R."/>
            <person name="Rosteck P.R. Jr."/>
            <person name="Skatrud P.L."/>
            <person name="Glass J.I."/>
        </authorList>
    </citation>
    <scope>NUCLEOTIDE SEQUENCE [LARGE SCALE GENOMIC DNA]</scope>
    <source>
        <strain>ATCC BAA-255 / R6</strain>
    </source>
</reference>
<dbReference type="EMBL" id="AE007317">
    <property type="protein sequence ID" value="AAK99520.1"/>
    <property type="status" value="ALT_INIT"/>
    <property type="molecule type" value="Genomic_DNA"/>
</dbReference>
<dbReference type="PIR" id="D97961">
    <property type="entry name" value="D97961"/>
</dbReference>
<dbReference type="RefSeq" id="NP_358310.1">
    <property type="nucleotide sequence ID" value="NC_003098.1"/>
</dbReference>
<dbReference type="RefSeq" id="WP_000064821.1">
    <property type="nucleotide sequence ID" value="NC_003098.1"/>
</dbReference>
<dbReference type="SMR" id="Q8DQE5"/>
<dbReference type="BioGRID" id="4181696">
    <property type="interactions" value="1"/>
</dbReference>
<dbReference type="STRING" id="171101.spr0716"/>
<dbReference type="KEGG" id="spr:spr0716"/>
<dbReference type="PATRIC" id="fig|171101.6.peg.792"/>
<dbReference type="eggNOG" id="COG4477">
    <property type="taxonomic scope" value="Bacteria"/>
</dbReference>
<dbReference type="HOGENOM" id="CLU_034079_2_0_9"/>
<dbReference type="Proteomes" id="UP000000586">
    <property type="component" value="Chromosome"/>
</dbReference>
<dbReference type="GO" id="GO:0005886">
    <property type="term" value="C:plasma membrane"/>
    <property type="evidence" value="ECO:0007669"/>
    <property type="project" value="UniProtKB-SubCell"/>
</dbReference>
<dbReference type="GO" id="GO:0005940">
    <property type="term" value="C:septin ring"/>
    <property type="evidence" value="ECO:0007669"/>
    <property type="project" value="InterPro"/>
</dbReference>
<dbReference type="GO" id="GO:0000917">
    <property type="term" value="P:division septum assembly"/>
    <property type="evidence" value="ECO:0007669"/>
    <property type="project" value="UniProtKB-KW"/>
</dbReference>
<dbReference type="GO" id="GO:0000921">
    <property type="term" value="P:septin ring assembly"/>
    <property type="evidence" value="ECO:0007669"/>
    <property type="project" value="InterPro"/>
</dbReference>
<dbReference type="HAMAP" id="MF_00728">
    <property type="entry name" value="EzrA"/>
    <property type="match status" value="1"/>
</dbReference>
<dbReference type="InterPro" id="IPR010379">
    <property type="entry name" value="EzrA"/>
</dbReference>
<dbReference type="NCBIfam" id="NF003410">
    <property type="entry name" value="PRK04778.1-4"/>
    <property type="match status" value="1"/>
</dbReference>
<dbReference type="Pfam" id="PF06160">
    <property type="entry name" value="EzrA"/>
    <property type="match status" value="1"/>
</dbReference>
<keyword id="KW-0131">Cell cycle</keyword>
<keyword id="KW-0132">Cell division</keyword>
<keyword id="KW-1003">Cell membrane</keyword>
<keyword id="KW-0175">Coiled coil</keyword>
<keyword id="KW-0472">Membrane</keyword>
<keyword id="KW-1185">Reference proteome</keyword>
<keyword id="KW-0717">Septation</keyword>
<keyword id="KW-0812">Transmembrane</keyword>
<keyword id="KW-1133">Transmembrane helix</keyword>
<organism>
    <name type="scientific">Streptococcus pneumoniae (strain ATCC BAA-255 / R6)</name>
    <dbReference type="NCBI Taxonomy" id="171101"/>
    <lineage>
        <taxon>Bacteria</taxon>
        <taxon>Bacillati</taxon>
        <taxon>Bacillota</taxon>
        <taxon>Bacilli</taxon>
        <taxon>Lactobacillales</taxon>
        <taxon>Streptococcaceae</taxon>
        <taxon>Streptococcus</taxon>
    </lineage>
</organism>
<sequence length="575" mass="66520">MSNGQLIYLMVAIAVILVLAYVVAIFLRKRNEGRLEALEERKEELYNLPVNDEVEAVKNMHLIGQSQVAFREWNQKWVDLSLNSFADIENNLFEAEGYNHSFRFLKASHQIDQIESQITLIEEDIAAIRNALADLEKQESKNSGRVLHALDLFEELQHRVAENSEQYGQALDEIEKQLENIQSEFSQFVTLNSSGDPVEAAVILDNTENHILALSHIVDRVPALVTTLSTELPDQLQDLEAGYRKLIDANYHFVETDIEARFHLLYEAFKKNQENIRQLELDNAEYENGQAQEEINALYDIFTREIAAQKVVENLLATLPTYLQHMKENNTLLGEDIARLNKTYLLPETAASHVRRIQTELESFEAAIVEVTSNQEEPTQAYSVLEENLEDLQTQLKDIEDEQISVSERLTQIEKDDINARQKANVYVNRLHTIKRYMEKRNLPGIPQTFLKLFFTASNNTEDLMVELEQKMINIESVTRVLEIATNDMEALETETYNIVQYATLTEQLLQYSNRYRSFDERIQEAFNEALDIFEKEFDYHASFDKISQALEVAEPGVTNRFVTSYEKTRETIRF</sequence>
<gene>
    <name evidence="1" type="primary">ezrA</name>
    <name type="ordered locus">spr0716</name>
</gene>
<accession>Q8DQE5</accession>
<feature type="chain" id="PRO_0000172890" description="Septation ring formation regulator EzrA">
    <location>
        <begin position="1"/>
        <end position="575"/>
    </location>
</feature>
<feature type="topological domain" description="Extracellular" evidence="1">
    <location>
        <begin position="1"/>
        <end position="8"/>
    </location>
</feature>
<feature type="transmembrane region" description="Helical" evidence="1">
    <location>
        <begin position="9"/>
        <end position="27"/>
    </location>
</feature>
<feature type="topological domain" description="Cytoplasmic" evidence="1">
    <location>
        <begin position="28"/>
        <end position="575"/>
    </location>
</feature>
<feature type="coiled-coil region" evidence="1">
    <location>
        <begin position="105"/>
        <end position="191"/>
    </location>
</feature>
<feature type="coiled-coil region" evidence="1">
    <location>
        <begin position="265"/>
        <end position="301"/>
    </location>
</feature>
<feature type="coiled-coil region" evidence="1">
    <location>
        <begin position="354"/>
        <end position="416"/>
    </location>
</feature>
<feature type="coiled-coil region" evidence="1">
    <location>
        <begin position="456"/>
        <end position="526"/>
    </location>
</feature>
<name>EZRA_STRR6</name>
<evidence type="ECO:0000255" key="1">
    <source>
        <dbReference type="HAMAP-Rule" id="MF_00728"/>
    </source>
</evidence>
<evidence type="ECO:0000305" key="2"/>
<protein>
    <recommendedName>
        <fullName evidence="1">Septation ring formation regulator EzrA</fullName>
    </recommendedName>
</protein>